<sequence length="79" mass="9135">MPKRVLQGVVISDKSDKTVVVKVERRYSHPLLKKTVRQSKNYKAHDENNQFKIGDQVSIQESRPISKDKCWIVVKDNVA</sequence>
<protein>
    <recommendedName>
        <fullName evidence="1">Small ribosomal subunit protein uS17</fullName>
    </recommendedName>
    <alternativeName>
        <fullName evidence="2">30S ribosomal protein S17</fullName>
    </alternativeName>
</protein>
<comment type="function">
    <text evidence="1">One of the primary rRNA binding proteins, it binds specifically to the 5'-end of 16S ribosomal RNA.</text>
</comment>
<comment type="subunit">
    <text evidence="1">Part of the 30S ribosomal subunit.</text>
</comment>
<comment type="similarity">
    <text evidence="1">Belongs to the universal ribosomal protein uS17 family.</text>
</comment>
<dbReference type="EMBL" id="AM260525">
    <property type="protein sequence ID" value="CAK01855.1"/>
    <property type="molecule type" value="Genomic_DNA"/>
</dbReference>
<dbReference type="RefSeq" id="WP_012231991.1">
    <property type="nucleotide sequence ID" value="NC_010161.1"/>
</dbReference>
<dbReference type="SMR" id="A9IW16"/>
<dbReference type="GeneID" id="71061550"/>
<dbReference type="KEGG" id="btr:BT_1509"/>
<dbReference type="eggNOG" id="COG0186">
    <property type="taxonomic scope" value="Bacteria"/>
</dbReference>
<dbReference type="HOGENOM" id="CLU_073626_1_1_5"/>
<dbReference type="Proteomes" id="UP000001592">
    <property type="component" value="Chromosome"/>
</dbReference>
<dbReference type="GO" id="GO:0022627">
    <property type="term" value="C:cytosolic small ribosomal subunit"/>
    <property type="evidence" value="ECO:0007669"/>
    <property type="project" value="TreeGrafter"/>
</dbReference>
<dbReference type="GO" id="GO:0019843">
    <property type="term" value="F:rRNA binding"/>
    <property type="evidence" value="ECO:0007669"/>
    <property type="project" value="UniProtKB-UniRule"/>
</dbReference>
<dbReference type="GO" id="GO:0003735">
    <property type="term" value="F:structural constituent of ribosome"/>
    <property type="evidence" value="ECO:0007669"/>
    <property type="project" value="InterPro"/>
</dbReference>
<dbReference type="GO" id="GO:0006412">
    <property type="term" value="P:translation"/>
    <property type="evidence" value="ECO:0007669"/>
    <property type="project" value="UniProtKB-UniRule"/>
</dbReference>
<dbReference type="CDD" id="cd00364">
    <property type="entry name" value="Ribosomal_uS17"/>
    <property type="match status" value="1"/>
</dbReference>
<dbReference type="Gene3D" id="2.40.50.140">
    <property type="entry name" value="Nucleic acid-binding proteins"/>
    <property type="match status" value="1"/>
</dbReference>
<dbReference type="HAMAP" id="MF_01345_B">
    <property type="entry name" value="Ribosomal_uS17_B"/>
    <property type="match status" value="1"/>
</dbReference>
<dbReference type="InterPro" id="IPR012340">
    <property type="entry name" value="NA-bd_OB-fold"/>
</dbReference>
<dbReference type="InterPro" id="IPR000266">
    <property type="entry name" value="Ribosomal_uS17"/>
</dbReference>
<dbReference type="InterPro" id="IPR019984">
    <property type="entry name" value="Ribosomal_uS17_bact/chlr"/>
</dbReference>
<dbReference type="InterPro" id="IPR019979">
    <property type="entry name" value="Ribosomal_uS17_CS"/>
</dbReference>
<dbReference type="NCBIfam" id="NF004123">
    <property type="entry name" value="PRK05610.1"/>
    <property type="match status" value="1"/>
</dbReference>
<dbReference type="NCBIfam" id="TIGR03635">
    <property type="entry name" value="uS17_bact"/>
    <property type="match status" value="1"/>
</dbReference>
<dbReference type="PANTHER" id="PTHR10744">
    <property type="entry name" value="40S RIBOSOMAL PROTEIN S11 FAMILY MEMBER"/>
    <property type="match status" value="1"/>
</dbReference>
<dbReference type="PANTHER" id="PTHR10744:SF1">
    <property type="entry name" value="SMALL RIBOSOMAL SUBUNIT PROTEIN US17M"/>
    <property type="match status" value="1"/>
</dbReference>
<dbReference type="Pfam" id="PF00366">
    <property type="entry name" value="Ribosomal_S17"/>
    <property type="match status" value="1"/>
</dbReference>
<dbReference type="PRINTS" id="PR00973">
    <property type="entry name" value="RIBOSOMALS17"/>
</dbReference>
<dbReference type="SUPFAM" id="SSF50249">
    <property type="entry name" value="Nucleic acid-binding proteins"/>
    <property type="match status" value="1"/>
</dbReference>
<dbReference type="PROSITE" id="PS00056">
    <property type="entry name" value="RIBOSOMAL_S17"/>
    <property type="match status" value="1"/>
</dbReference>
<proteinExistence type="inferred from homology"/>
<organism>
    <name type="scientific">Bartonella tribocorum (strain CIP 105476 / IBS 506)</name>
    <dbReference type="NCBI Taxonomy" id="382640"/>
    <lineage>
        <taxon>Bacteria</taxon>
        <taxon>Pseudomonadati</taxon>
        <taxon>Pseudomonadota</taxon>
        <taxon>Alphaproteobacteria</taxon>
        <taxon>Hyphomicrobiales</taxon>
        <taxon>Bartonellaceae</taxon>
        <taxon>Bartonella</taxon>
    </lineage>
</organism>
<keyword id="KW-0687">Ribonucleoprotein</keyword>
<keyword id="KW-0689">Ribosomal protein</keyword>
<keyword id="KW-0694">RNA-binding</keyword>
<keyword id="KW-0699">rRNA-binding</keyword>
<feature type="chain" id="PRO_1000086830" description="Small ribosomal subunit protein uS17">
    <location>
        <begin position="1"/>
        <end position="79"/>
    </location>
</feature>
<evidence type="ECO:0000255" key="1">
    <source>
        <dbReference type="HAMAP-Rule" id="MF_01345"/>
    </source>
</evidence>
<evidence type="ECO:0000305" key="2"/>
<gene>
    <name evidence="1" type="primary">rpsQ</name>
    <name type="ordered locus">BT_1509</name>
</gene>
<name>RS17_BART1</name>
<reference key="1">
    <citation type="journal article" date="2007" name="Nat. Genet.">
        <title>Genomic analysis of Bartonella identifies type IV secretion systems as host adaptability factors.</title>
        <authorList>
            <person name="Saenz H.L."/>
            <person name="Engel P."/>
            <person name="Stoeckli M.C."/>
            <person name="Lanz C."/>
            <person name="Raddatz G."/>
            <person name="Vayssier-Taussat M."/>
            <person name="Birtles R."/>
            <person name="Schuster S.C."/>
            <person name="Dehio C."/>
        </authorList>
    </citation>
    <scope>NUCLEOTIDE SEQUENCE [LARGE SCALE GENOMIC DNA]</scope>
    <source>
        <strain>CIP 105476 / IBS 506</strain>
    </source>
</reference>
<accession>A9IW16</accession>